<sequence>MVKVYAPASSANMSVGFDVLGAAVTPVDGTLLGDVVSVEAADHFRLHNLGRFADKLPPEPRENIVYQCWERFCQALGKTIPVAMTLEKNMPIGSGLGSSACSVVAALVAMNEHCGKPLNDTRLLALMGELEGRISGSIHYDNVAPCFLGGMQLMIEENGIISQQVPGFDEWLWVLAYPGIKVSTAEARAILPAQYRRQDCIAHGRHLAGFIHACYSRQPQLAAALMKDVIAEPYRARLLPGFSQARQAVSEIGALASGISGSGPTLFALCDKPETAQRVADWLSKHYLQNQEGFVHICRLDTAGARVVG</sequence>
<feature type="chain" id="PRO_1000122443" description="Homoserine kinase">
    <location>
        <begin position="1"/>
        <end position="309"/>
    </location>
</feature>
<feature type="binding site" evidence="1">
    <location>
        <begin position="91"/>
        <end position="101"/>
    </location>
    <ligand>
        <name>ATP</name>
        <dbReference type="ChEBI" id="CHEBI:30616"/>
    </ligand>
</feature>
<dbReference type="EC" id="2.7.1.39" evidence="1"/>
<dbReference type="EMBL" id="CP001127">
    <property type="protein sequence ID" value="ACF88777.1"/>
    <property type="molecule type" value="Genomic_DNA"/>
</dbReference>
<dbReference type="RefSeq" id="WP_000241685.1">
    <property type="nucleotide sequence ID" value="NC_011094.1"/>
</dbReference>
<dbReference type="SMR" id="B4TVY5"/>
<dbReference type="KEGG" id="sew:SeSA_A0003"/>
<dbReference type="HOGENOM" id="CLU_041243_1_1_6"/>
<dbReference type="UniPathway" id="UPA00050">
    <property type="reaction ID" value="UER00064"/>
</dbReference>
<dbReference type="Proteomes" id="UP000001865">
    <property type="component" value="Chromosome"/>
</dbReference>
<dbReference type="GO" id="GO:0005737">
    <property type="term" value="C:cytoplasm"/>
    <property type="evidence" value="ECO:0007669"/>
    <property type="project" value="UniProtKB-SubCell"/>
</dbReference>
<dbReference type="GO" id="GO:0005524">
    <property type="term" value="F:ATP binding"/>
    <property type="evidence" value="ECO:0007669"/>
    <property type="project" value="UniProtKB-UniRule"/>
</dbReference>
<dbReference type="GO" id="GO:0004413">
    <property type="term" value="F:homoserine kinase activity"/>
    <property type="evidence" value="ECO:0007669"/>
    <property type="project" value="UniProtKB-UniRule"/>
</dbReference>
<dbReference type="GO" id="GO:0009088">
    <property type="term" value="P:threonine biosynthetic process"/>
    <property type="evidence" value="ECO:0007669"/>
    <property type="project" value="UniProtKB-UniRule"/>
</dbReference>
<dbReference type="FunFam" id="3.30.230.10:FF:000020">
    <property type="entry name" value="Homoserine kinase"/>
    <property type="match status" value="1"/>
</dbReference>
<dbReference type="FunFam" id="3.30.70.890:FF:000002">
    <property type="entry name" value="Homoserine kinase"/>
    <property type="match status" value="1"/>
</dbReference>
<dbReference type="Gene3D" id="3.30.230.10">
    <property type="match status" value="1"/>
</dbReference>
<dbReference type="Gene3D" id="3.30.70.890">
    <property type="entry name" value="GHMP kinase, C-terminal domain"/>
    <property type="match status" value="1"/>
</dbReference>
<dbReference type="HAMAP" id="MF_00384">
    <property type="entry name" value="Homoser_kinase"/>
    <property type="match status" value="1"/>
</dbReference>
<dbReference type="InterPro" id="IPR013750">
    <property type="entry name" value="GHMP_kinase_C_dom"/>
</dbReference>
<dbReference type="InterPro" id="IPR036554">
    <property type="entry name" value="GHMP_kinase_C_sf"/>
</dbReference>
<dbReference type="InterPro" id="IPR006204">
    <property type="entry name" value="GHMP_kinase_N_dom"/>
</dbReference>
<dbReference type="InterPro" id="IPR006203">
    <property type="entry name" value="GHMP_knse_ATP-bd_CS"/>
</dbReference>
<dbReference type="InterPro" id="IPR000870">
    <property type="entry name" value="Homoserine_kinase"/>
</dbReference>
<dbReference type="InterPro" id="IPR020568">
    <property type="entry name" value="Ribosomal_Su5_D2-typ_SF"/>
</dbReference>
<dbReference type="InterPro" id="IPR014721">
    <property type="entry name" value="Ribsml_uS5_D2-typ_fold_subgr"/>
</dbReference>
<dbReference type="NCBIfam" id="NF002288">
    <property type="entry name" value="PRK01212.1-4"/>
    <property type="match status" value="1"/>
</dbReference>
<dbReference type="NCBIfam" id="TIGR00191">
    <property type="entry name" value="thrB"/>
    <property type="match status" value="1"/>
</dbReference>
<dbReference type="PANTHER" id="PTHR20861:SF1">
    <property type="entry name" value="HOMOSERINE KINASE"/>
    <property type="match status" value="1"/>
</dbReference>
<dbReference type="PANTHER" id="PTHR20861">
    <property type="entry name" value="HOMOSERINE/4-DIPHOSPHOCYTIDYL-2-C-METHYL-D-ERYTHRITOL KINASE"/>
    <property type="match status" value="1"/>
</dbReference>
<dbReference type="Pfam" id="PF08544">
    <property type="entry name" value="GHMP_kinases_C"/>
    <property type="match status" value="1"/>
</dbReference>
<dbReference type="Pfam" id="PF00288">
    <property type="entry name" value="GHMP_kinases_N"/>
    <property type="match status" value="1"/>
</dbReference>
<dbReference type="PIRSF" id="PIRSF000676">
    <property type="entry name" value="Homoser_kin"/>
    <property type="match status" value="1"/>
</dbReference>
<dbReference type="PRINTS" id="PR00958">
    <property type="entry name" value="HOMSERKINASE"/>
</dbReference>
<dbReference type="SUPFAM" id="SSF55060">
    <property type="entry name" value="GHMP Kinase, C-terminal domain"/>
    <property type="match status" value="1"/>
</dbReference>
<dbReference type="SUPFAM" id="SSF54211">
    <property type="entry name" value="Ribosomal protein S5 domain 2-like"/>
    <property type="match status" value="1"/>
</dbReference>
<dbReference type="PROSITE" id="PS00627">
    <property type="entry name" value="GHMP_KINASES_ATP"/>
    <property type="match status" value="1"/>
</dbReference>
<reference key="1">
    <citation type="journal article" date="2011" name="J. Bacteriol.">
        <title>Comparative genomics of 28 Salmonella enterica isolates: evidence for CRISPR-mediated adaptive sublineage evolution.</title>
        <authorList>
            <person name="Fricke W.F."/>
            <person name="Mammel M.K."/>
            <person name="McDermott P.F."/>
            <person name="Tartera C."/>
            <person name="White D.G."/>
            <person name="Leclerc J.E."/>
            <person name="Ravel J."/>
            <person name="Cebula T.A."/>
        </authorList>
    </citation>
    <scope>NUCLEOTIDE SEQUENCE [LARGE SCALE GENOMIC DNA]</scope>
    <source>
        <strain>CVM19633</strain>
    </source>
</reference>
<keyword id="KW-0028">Amino-acid biosynthesis</keyword>
<keyword id="KW-0067">ATP-binding</keyword>
<keyword id="KW-0963">Cytoplasm</keyword>
<keyword id="KW-0418">Kinase</keyword>
<keyword id="KW-0547">Nucleotide-binding</keyword>
<keyword id="KW-0791">Threonine biosynthesis</keyword>
<keyword id="KW-0808">Transferase</keyword>
<organism>
    <name type="scientific">Salmonella schwarzengrund (strain CVM19633)</name>
    <dbReference type="NCBI Taxonomy" id="439843"/>
    <lineage>
        <taxon>Bacteria</taxon>
        <taxon>Pseudomonadati</taxon>
        <taxon>Pseudomonadota</taxon>
        <taxon>Gammaproteobacteria</taxon>
        <taxon>Enterobacterales</taxon>
        <taxon>Enterobacteriaceae</taxon>
        <taxon>Salmonella</taxon>
    </lineage>
</organism>
<comment type="function">
    <text evidence="1">Catalyzes the ATP-dependent phosphorylation of L-homoserine to L-homoserine phosphate.</text>
</comment>
<comment type="catalytic activity">
    <reaction evidence="1">
        <text>L-homoserine + ATP = O-phospho-L-homoserine + ADP + H(+)</text>
        <dbReference type="Rhea" id="RHEA:13985"/>
        <dbReference type="ChEBI" id="CHEBI:15378"/>
        <dbReference type="ChEBI" id="CHEBI:30616"/>
        <dbReference type="ChEBI" id="CHEBI:57476"/>
        <dbReference type="ChEBI" id="CHEBI:57590"/>
        <dbReference type="ChEBI" id="CHEBI:456216"/>
        <dbReference type="EC" id="2.7.1.39"/>
    </reaction>
</comment>
<comment type="pathway">
    <text evidence="1">Amino-acid biosynthesis; L-threonine biosynthesis; L-threonine from L-aspartate: step 4/5.</text>
</comment>
<comment type="subcellular location">
    <subcellularLocation>
        <location evidence="1">Cytoplasm</location>
    </subcellularLocation>
</comment>
<comment type="similarity">
    <text evidence="1">Belongs to the GHMP kinase family. Homoserine kinase subfamily.</text>
</comment>
<name>KHSE_SALSV</name>
<protein>
    <recommendedName>
        <fullName evidence="1">Homoserine kinase</fullName>
        <shortName evidence="1">HK</shortName>
        <shortName evidence="1">HSK</shortName>
        <ecNumber evidence="1">2.7.1.39</ecNumber>
    </recommendedName>
</protein>
<proteinExistence type="inferred from homology"/>
<evidence type="ECO:0000255" key="1">
    <source>
        <dbReference type="HAMAP-Rule" id="MF_00384"/>
    </source>
</evidence>
<gene>
    <name evidence="1" type="primary">thrB</name>
    <name type="ordered locus">SeSA_A0003</name>
</gene>
<accession>B4TVY5</accession>